<gene>
    <name evidence="1" type="primary">rplU</name>
    <name type="ordered locus">Gbem_0162</name>
</gene>
<accession>B5E956</accession>
<reference key="1">
    <citation type="submission" date="2008-07" db="EMBL/GenBank/DDBJ databases">
        <title>Complete sequence of Geobacter bemidjiensis BEM.</title>
        <authorList>
            <consortium name="US DOE Joint Genome Institute"/>
            <person name="Lucas S."/>
            <person name="Copeland A."/>
            <person name="Lapidus A."/>
            <person name="Glavina del Rio T."/>
            <person name="Dalin E."/>
            <person name="Tice H."/>
            <person name="Bruce D."/>
            <person name="Goodwin L."/>
            <person name="Pitluck S."/>
            <person name="Kiss H."/>
            <person name="Brettin T."/>
            <person name="Detter J.C."/>
            <person name="Han C."/>
            <person name="Kuske C.R."/>
            <person name="Schmutz J."/>
            <person name="Larimer F."/>
            <person name="Land M."/>
            <person name="Hauser L."/>
            <person name="Kyrpides N."/>
            <person name="Lykidis A."/>
            <person name="Lovley D."/>
            <person name="Richardson P."/>
        </authorList>
    </citation>
    <scope>NUCLEOTIDE SEQUENCE [LARGE SCALE GENOMIC DNA]</scope>
    <source>
        <strain>ATCC BAA-1014 / DSM 16622 / JCM 12645 / Bem</strain>
    </source>
</reference>
<feature type="chain" id="PRO_1000143803" description="Large ribosomal subunit protein bL21">
    <location>
        <begin position="1"/>
        <end position="102"/>
    </location>
</feature>
<protein>
    <recommendedName>
        <fullName evidence="1">Large ribosomal subunit protein bL21</fullName>
    </recommendedName>
    <alternativeName>
        <fullName evidence="2">50S ribosomal protein L21</fullName>
    </alternativeName>
</protein>
<sequence>MYAVVKTGGKQYKVSEGDFLKVEKLEGAVGDTVEFSEILMVGGDKVVIGTPLVPSASVVGKIVEQGKDKKILVFKSKRRKNTRKLNGHRQLRTILKIEKINA</sequence>
<dbReference type="EMBL" id="CP001124">
    <property type="protein sequence ID" value="ACH37193.1"/>
    <property type="molecule type" value="Genomic_DNA"/>
</dbReference>
<dbReference type="RefSeq" id="WP_012528601.1">
    <property type="nucleotide sequence ID" value="NC_011146.1"/>
</dbReference>
<dbReference type="SMR" id="B5E956"/>
<dbReference type="STRING" id="404380.Gbem_0162"/>
<dbReference type="KEGG" id="gbm:Gbem_0162"/>
<dbReference type="eggNOG" id="COG0261">
    <property type="taxonomic scope" value="Bacteria"/>
</dbReference>
<dbReference type="HOGENOM" id="CLU_061463_3_2_7"/>
<dbReference type="OrthoDB" id="9813334at2"/>
<dbReference type="Proteomes" id="UP000008825">
    <property type="component" value="Chromosome"/>
</dbReference>
<dbReference type="GO" id="GO:0005737">
    <property type="term" value="C:cytoplasm"/>
    <property type="evidence" value="ECO:0007669"/>
    <property type="project" value="UniProtKB-ARBA"/>
</dbReference>
<dbReference type="GO" id="GO:1990904">
    <property type="term" value="C:ribonucleoprotein complex"/>
    <property type="evidence" value="ECO:0007669"/>
    <property type="project" value="UniProtKB-KW"/>
</dbReference>
<dbReference type="GO" id="GO:0005840">
    <property type="term" value="C:ribosome"/>
    <property type="evidence" value="ECO:0007669"/>
    <property type="project" value="UniProtKB-KW"/>
</dbReference>
<dbReference type="GO" id="GO:0019843">
    <property type="term" value="F:rRNA binding"/>
    <property type="evidence" value="ECO:0007669"/>
    <property type="project" value="UniProtKB-UniRule"/>
</dbReference>
<dbReference type="GO" id="GO:0003735">
    <property type="term" value="F:structural constituent of ribosome"/>
    <property type="evidence" value="ECO:0007669"/>
    <property type="project" value="InterPro"/>
</dbReference>
<dbReference type="GO" id="GO:0006412">
    <property type="term" value="P:translation"/>
    <property type="evidence" value="ECO:0007669"/>
    <property type="project" value="UniProtKB-UniRule"/>
</dbReference>
<dbReference type="HAMAP" id="MF_01363">
    <property type="entry name" value="Ribosomal_bL21"/>
    <property type="match status" value="1"/>
</dbReference>
<dbReference type="InterPro" id="IPR028909">
    <property type="entry name" value="bL21-like"/>
</dbReference>
<dbReference type="InterPro" id="IPR036164">
    <property type="entry name" value="bL21-like_sf"/>
</dbReference>
<dbReference type="InterPro" id="IPR001787">
    <property type="entry name" value="Ribosomal_bL21"/>
</dbReference>
<dbReference type="InterPro" id="IPR018258">
    <property type="entry name" value="Ribosomal_bL21_CS"/>
</dbReference>
<dbReference type="NCBIfam" id="TIGR00061">
    <property type="entry name" value="L21"/>
    <property type="match status" value="1"/>
</dbReference>
<dbReference type="PANTHER" id="PTHR21349">
    <property type="entry name" value="50S RIBOSOMAL PROTEIN L21"/>
    <property type="match status" value="1"/>
</dbReference>
<dbReference type="PANTHER" id="PTHR21349:SF0">
    <property type="entry name" value="LARGE RIBOSOMAL SUBUNIT PROTEIN BL21M"/>
    <property type="match status" value="1"/>
</dbReference>
<dbReference type="Pfam" id="PF00829">
    <property type="entry name" value="Ribosomal_L21p"/>
    <property type="match status" value="1"/>
</dbReference>
<dbReference type="SUPFAM" id="SSF141091">
    <property type="entry name" value="L21p-like"/>
    <property type="match status" value="1"/>
</dbReference>
<dbReference type="PROSITE" id="PS01169">
    <property type="entry name" value="RIBOSOMAL_L21"/>
    <property type="match status" value="1"/>
</dbReference>
<name>RL21_CITBB</name>
<evidence type="ECO:0000255" key="1">
    <source>
        <dbReference type="HAMAP-Rule" id="MF_01363"/>
    </source>
</evidence>
<evidence type="ECO:0000305" key="2"/>
<comment type="function">
    <text evidence="1">This protein binds to 23S rRNA in the presence of protein L20.</text>
</comment>
<comment type="subunit">
    <text evidence="1">Part of the 50S ribosomal subunit. Contacts protein L20.</text>
</comment>
<comment type="similarity">
    <text evidence="1">Belongs to the bacterial ribosomal protein bL21 family.</text>
</comment>
<keyword id="KW-1185">Reference proteome</keyword>
<keyword id="KW-0687">Ribonucleoprotein</keyword>
<keyword id="KW-0689">Ribosomal protein</keyword>
<keyword id="KW-0694">RNA-binding</keyword>
<keyword id="KW-0699">rRNA-binding</keyword>
<organism>
    <name type="scientific">Citrifermentans bemidjiense (strain ATCC BAA-1014 / DSM 16622 / JCM 12645 / Bem)</name>
    <name type="common">Geobacter bemidjiensis</name>
    <dbReference type="NCBI Taxonomy" id="404380"/>
    <lineage>
        <taxon>Bacteria</taxon>
        <taxon>Pseudomonadati</taxon>
        <taxon>Thermodesulfobacteriota</taxon>
        <taxon>Desulfuromonadia</taxon>
        <taxon>Geobacterales</taxon>
        <taxon>Geobacteraceae</taxon>
        <taxon>Citrifermentans</taxon>
    </lineage>
</organism>
<proteinExistence type="inferred from homology"/>